<proteinExistence type="inferred from homology"/>
<name>PSB30_NOSP7</name>
<protein>
    <recommendedName>
        <fullName evidence="1">Photosystem II reaction center protein Psb30</fullName>
    </recommendedName>
    <alternativeName>
        <fullName evidence="1">Photosystem II reaction center protein Ycf12</fullName>
    </alternativeName>
</protein>
<keyword id="KW-0472">Membrane</keyword>
<keyword id="KW-0602">Photosynthesis</keyword>
<keyword id="KW-0604">Photosystem II</keyword>
<keyword id="KW-1185">Reference proteome</keyword>
<keyword id="KW-0793">Thylakoid</keyword>
<keyword id="KW-0812">Transmembrane</keyword>
<keyword id="KW-1133">Transmembrane helix</keyword>
<evidence type="ECO:0000255" key="1">
    <source>
        <dbReference type="HAMAP-Rule" id="MF_01329"/>
    </source>
</evidence>
<dbReference type="EMBL" id="CP001037">
    <property type="protein sequence ID" value="ACC83105.1"/>
    <property type="molecule type" value="Genomic_DNA"/>
</dbReference>
<dbReference type="RefSeq" id="WP_012411063.1">
    <property type="nucleotide sequence ID" value="NC_010628.1"/>
</dbReference>
<dbReference type="SMR" id="B2IYZ8"/>
<dbReference type="STRING" id="63737.Npun_F4753"/>
<dbReference type="EnsemblBacteria" id="ACC83105">
    <property type="protein sequence ID" value="ACC83105"/>
    <property type="gene ID" value="Npun_F4753"/>
</dbReference>
<dbReference type="KEGG" id="npu:Npun_F4753"/>
<dbReference type="eggNOG" id="ENOG503209K">
    <property type="taxonomic scope" value="Bacteria"/>
</dbReference>
<dbReference type="HOGENOM" id="CLU_196761_0_1_3"/>
<dbReference type="OrthoDB" id="516821at2"/>
<dbReference type="PhylomeDB" id="B2IYZ8"/>
<dbReference type="Proteomes" id="UP000001191">
    <property type="component" value="Chromosome"/>
</dbReference>
<dbReference type="GO" id="GO:0009523">
    <property type="term" value="C:photosystem II"/>
    <property type="evidence" value="ECO:0007669"/>
    <property type="project" value="UniProtKB-KW"/>
</dbReference>
<dbReference type="GO" id="GO:0031676">
    <property type="term" value="C:plasma membrane-derived thylakoid membrane"/>
    <property type="evidence" value="ECO:0007669"/>
    <property type="project" value="UniProtKB-SubCell"/>
</dbReference>
<dbReference type="GO" id="GO:0015979">
    <property type="term" value="P:photosynthesis"/>
    <property type="evidence" value="ECO:0007669"/>
    <property type="project" value="UniProtKB-KW"/>
</dbReference>
<dbReference type="HAMAP" id="MF_01329">
    <property type="entry name" value="PSII_Psb30_Ycf12"/>
    <property type="match status" value="1"/>
</dbReference>
<dbReference type="InterPro" id="IPR010284">
    <property type="entry name" value="PSII_Ycf12_core-subunit"/>
</dbReference>
<dbReference type="NCBIfam" id="NF010239">
    <property type="entry name" value="PRK13686.1"/>
    <property type="match status" value="1"/>
</dbReference>
<dbReference type="Pfam" id="PF05969">
    <property type="entry name" value="PSII_Ycf12"/>
    <property type="match status" value="1"/>
</dbReference>
<accession>B2IYZ8</accession>
<reference key="1">
    <citation type="journal article" date="2013" name="Plant Physiol.">
        <title>A Nostoc punctiforme Sugar Transporter Necessary to Establish a Cyanobacterium-Plant Symbiosis.</title>
        <authorList>
            <person name="Ekman M."/>
            <person name="Picossi S."/>
            <person name="Campbell E.L."/>
            <person name="Meeks J.C."/>
            <person name="Flores E."/>
        </authorList>
    </citation>
    <scope>NUCLEOTIDE SEQUENCE [LARGE SCALE GENOMIC DNA]</scope>
    <source>
        <strain>ATCC 29133 / PCC 73102</strain>
    </source>
</reference>
<sequence>MFDAVSDLVNAFTSINWEVIFQLLSVALIVIAGPVVIFLLAFRNGNL</sequence>
<organism>
    <name type="scientific">Nostoc punctiforme (strain ATCC 29133 / PCC 73102)</name>
    <dbReference type="NCBI Taxonomy" id="63737"/>
    <lineage>
        <taxon>Bacteria</taxon>
        <taxon>Bacillati</taxon>
        <taxon>Cyanobacteriota</taxon>
        <taxon>Cyanophyceae</taxon>
        <taxon>Nostocales</taxon>
        <taxon>Nostocaceae</taxon>
        <taxon>Nostoc</taxon>
    </lineage>
</organism>
<feature type="chain" id="PRO_0000365271" description="Photosystem II reaction center protein Psb30">
    <location>
        <begin position="1"/>
        <end position="47"/>
    </location>
</feature>
<feature type="transmembrane region" description="Helical" evidence="1">
    <location>
        <begin position="19"/>
        <end position="39"/>
    </location>
</feature>
<gene>
    <name evidence="1" type="primary">psb30</name>
    <name evidence="1" type="synonym">ycf12</name>
    <name type="ordered locus">Npun_F4753</name>
</gene>
<comment type="function">
    <text evidence="1">A core subunit of photosystem II (PSII), probably helps stabilize the reaction center.</text>
</comment>
<comment type="subunit">
    <text evidence="1">PSII is composed of 1 copy each of membrane proteins PsbA, PsbB, PsbC, PsbD, PsbE, PsbF, PsbH, PsbI, PsbJ, PsbK, PsbL, PsbM, PsbT, PsbX, PsbY, PsbZ, Psb30/Ycf12, peripheral proteins PsbO, CyanoQ (PsbQ), PsbU, PsbV and a large number of cofactors. It forms dimeric complexes.</text>
</comment>
<comment type="subcellular location">
    <subcellularLocation>
        <location evidence="1">Cellular thylakoid membrane</location>
        <topology evidence="1">Single-pass membrane protein</topology>
    </subcellularLocation>
</comment>
<comment type="similarity">
    <text evidence="1">Belongs to the Psb30/Ycf12 family.</text>
</comment>